<accession>A0A0H2ZLL3</accession>
<feature type="chain" id="PRO_0000458654" description="Probable ergothioneine transport ATP-binding protein EgtUA">
    <location>
        <begin position="1"/>
        <end position="242"/>
    </location>
</feature>
<feature type="domain" description="ABC transporter" evidence="1">
    <location>
        <begin position="2"/>
        <end position="236"/>
    </location>
</feature>
<feature type="binding site" evidence="1">
    <location>
        <begin position="34"/>
        <end position="41"/>
    </location>
    <ligand>
        <name>ATP</name>
        <dbReference type="ChEBI" id="CHEBI:30616"/>
    </ligand>
</feature>
<comment type="function">
    <text evidence="2">Part of an ABC transporter complex EgtU required for the uptake of ergothioneine (EGT), a natural low-molecular weight (LMW) thiol antioxidant (PubMed:36481738). Probably responsible for energy coupling to the transport system (PubMed:36481738).</text>
</comment>
<comment type="catalytic activity">
    <reaction evidence="5">
        <text>ergothioneine(out) + ATP + H2O = ergothioneine(in) + ADP + phosphate + H(+)</text>
        <dbReference type="Rhea" id="RHEA:76247"/>
        <dbReference type="ChEBI" id="CHEBI:15377"/>
        <dbReference type="ChEBI" id="CHEBI:15378"/>
        <dbReference type="ChEBI" id="CHEBI:30616"/>
        <dbReference type="ChEBI" id="CHEBI:43474"/>
        <dbReference type="ChEBI" id="CHEBI:134344"/>
        <dbReference type="ChEBI" id="CHEBI:456216"/>
        <dbReference type="EC" id="7.6.2.9"/>
    </reaction>
    <physiologicalReaction direction="left-to-right" evidence="5">
        <dbReference type="Rhea" id="RHEA:76248"/>
    </physiologicalReaction>
</comment>
<comment type="subunit">
    <text evidence="5">The complex is probably composed of at least an ATP-binding protein (EgtUA) and a transmembrane protein (EgtUBC).</text>
</comment>
<comment type="subcellular location">
    <subcellularLocation>
        <location evidence="5">Cell inner membrane</location>
    </subcellularLocation>
</comment>
<comment type="disruption phenotype">
    <text evidence="2">Lacks ATPase activity in vitro (PubMed:36481738). Does not import ergothioneine (PubMed:36481738).</text>
</comment>
<comment type="similarity">
    <text evidence="4">Belongs to the ABC transporter superfamily.</text>
</comment>
<name>EGTUA_STRP2</name>
<protein>
    <recommendedName>
        <fullName evidence="3">Probable ergothioneine transport ATP-binding protein EgtUA</fullName>
        <ecNumber evidence="5">7.6.2.9</ecNumber>
    </recommendedName>
</protein>
<gene>
    <name evidence="3" type="primary">egtUA</name>
    <name evidence="6" type="synonym">proV</name>
    <name evidence="6" type="ordered locus">SPD_1643</name>
</gene>
<evidence type="ECO:0000255" key="1">
    <source>
        <dbReference type="PROSITE-ProRule" id="PRU00434"/>
    </source>
</evidence>
<evidence type="ECO:0000269" key="2">
    <source>
    </source>
</evidence>
<evidence type="ECO:0000303" key="3">
    <source>
    </source>
</evidence>
<evidence type="ECO:0000305" key="4"/>
<evidence type="ECO:0000305" key="5">
    <source>
    </source>
</evidence>
<evidence type="ECO:0000312" key="6">
    <source>
        <dbReference type="EMBL" id="ABJ53722.1"/>
    </source>
</evidence>
<evidence type="ECO:0000312" key="7">
    <source>
        <dbReference type="Proteomes" id="UP000001452"/>
    </source>
</evidence>
<dbReference type="EC" id="7.6.2.9" evidence="5"/>
<dbReference type="EMBL" id="CP000410">
    <property type="protein sequence ID" value="ABJ53722.1"/>
    <property type="molecule type" value="Genomic_DNA"/>
</dbReference>
<dbReference type="RefSeq" id="WP_000575213.1">
    <property type="nucleotide sequence ID" value="NZ_JAMLJR010000019.1"/>
</dbReference>
<dbReference type="SMR" id="A0A0H2ZLL3"/>
<dbReference type="PaxDb" id="373153-SPD_1643"/>
<dbReference type="KEGG" id="spd:SPD_1643"/>
<dbReference type="eggNOG" id="COG1125">
    <property type="taxonomic scope" value="Bacteria"/>
</dbReference>
<dbReference type="HOGENOM" id="CLU_000604_1_22_9"/>
<dbReference type="BioCyc" id="SPNE373153:G1G6V-1775-MONOMER"/>
<dbReference type="Proteomes" id="UP000001452">
    <property type="component" value="Chromosome"/>
</dbReference>
<dbReference type="GO" id="GO:0005886">
    <property type="term" value="C:plasma membrane"/>
    <property type="evidence" value="ECO:0007669"/>
    <property type="project" value="UniProtKB-SubCell"/>
</dbReference>
<dbReference type="GO" id="GO:0005524">
    <property type="term" value="F:ATP binding"/>
    <property type="evidence" value="ECO:0007669"/>
    <property type="project" value="UniProtKB-KW"/>
</dbReference>
<dbReference type="GO" id="GO:0016887">
    <property type="term" value="F:ATP hydrolysis activity"/>
    <property type="evidence" value="ECO:0000315"/>
    <property type="project" value="UniProtKB"/>
</dbReference>
<dbReference type="GO" id="GO:0006865">
    <property type="term" value="P:amino acid transport"/>
    <property type="evidence" value="ECO:0000315"/>
    <property type="project" value="UniProtKB"/>
</dbReference>
<dbReference type="GO" id="GO:0015697">
    <property type="term" value="P:quaternary ammonium group transport"/>
    <property type="evidence" value="ECO:0000315"/>
    <property type="project" value="UniProtKB"/>
</dbReference>
<dbReference type="FunFam" id="3.40.50.300:FF:000425">
    <property type="entry name" value="Probable ABC transporter, ATP-binding subunit"/>
    <property type="match status" value="1"/>
</dbReference>
<dbReference type="Gene3D" id="3.40.50.300">
    <property type="entry name" value="P-loop containing nucleotide triphosphate hydrolases"/>
    <property type="match status" value="1"/>
</dbReference>
<dbReference type="InterPro" id="IPR003593">
    <property type="entry name" value="AAA+_ATPase"/>
</dbReference>
<dbReference type="InterPro" id="IPR003439">
    <property type="entry name" value="ABC_transporter-like_ATP-bd"/>
</dbReference>
<dbReference type="InterPro" id="IPR017871">
    <property type="entry name" value="ABC_transporter-like_CS"/>
</dbReference>
<dbReference type="InterPro" id="IPR027417">
    <property type="entry name" value="P-loop_NTPase"/>
</dbReference>
<dbReference type="PANTHER" id="PTHR43117">
    <property type="entry name" value="OSMOPROTECTANT IMPORT ATP-BINDING PROTEIN OSMV"/>
    <property type="match status" value="1"/>
</dbReference>
<dbReference type="PANTHER" id="PTHR43117:SF4">
    <property type="entry name" value="OSMOPROTECTANT IMPORT ATP-BINDING PROTEIN OSMV"/>
    <property type="match status" value="1"/>
</dbReference>
<dbReference type="Pfam" id="PF00005">
    <property type="entry name" value="ABC_tran"/>
    <property type="match status" value="1"/>
</dbReference>
<dbReference type="SMART" id="SM00382">
    <property type="entry name" value="AAA"/>
    <property type="match status" value="1"/>
</dbReference>
<dbReference type="SUPFAM" id="SSF52540">
    <property type="entry name" value="P-loop containing nucleoside triphosphate hydrolases"/>
    <property type="match status" value="1"/>
</dbReference>
<dbReference type="PROSITE" id="PS00211">
    <property type="entry name" value="ABC_TRANSPORTER_1"/>
    <property type="match status" value="1"/>
</dbReference>
<dbReference type="PROSITE" id="PS50893">
    <property type="entry name" value="ABC_TRANSPORTER_2"/>
    <property type="match status" value="1"/>
</dbReference>
<reference evidence="7" key="1">
    <citation type="journal article" date="2007" name="J. Bacteriol.">
        <title>Genome sequence of Avery's virulent serotype 2 strain D39 of Streptococcus pneumoniae and comparison with that of unencapsulated laboratory strain R6.</title>
        <authorList>
            <person name="Lanie J.A."/>
            <person name="Ng W.-L."/>
            <person name="Kazmierczak K.M."/>
            <person name="Andrzejewski T.M."/>
            <person name="Davidsen T.M."/>
            <person name="Wayne K.J."/>
            <person name="Tettelin H."/>
            <person name="Glass J.I."/>
            <person name="Winkler M.E."/>
        </authorList>
    </citation>
    <scope>NUCLEOTIDE SEQUENCE [LARGE SCALE GENOMIC DNA]</scope>
    <source>
        <strain evidence="7">D39 / NCTC 7466</strain>
    </source>
</reference>
<reference evidence="4" key="2">
    <citation type="journal article" date="2022" name="Nat. Commun.">
        <title>Discovery and structure of a widespread bacterial ABC transporter specific for ergothioneine.</title>
        <authorList>
            <person name="Zhang Y."/>
            <person name="Gonzalez-Gutierrez G."/>
            <person name="Legg K.A."/>
            <person name="Walsh B.J.C."/>
            <person name="Pis Diez C.M."/>
            <person name="Edmonds K.A."/>
            <person name="Giedroc D.P."/>
        </authorList>
    </citation>
    <scope>FUNCTION</scope>
    <scope>SUBCELLULAR LOCATION</scope>
    <scope>DISRUPTION PHENOTYPE</scope>
</reference>
<organism evidence="7">
    <name type="scientific">Streptococcus pneumoniae serotype 2 (strain D39 / NCTC 7466)</name>
    <dbReference type="NCBI Taxonomy" id="373153"/>
    <lineage>
        <taxon>Bacteria</taxon>
        <taxon>Bacillati</taxon>
        <taxon>Bacillota</taxon>
        <taxon>Bacilli</taxon>
        <taxon>Lactobacillales</taxon>
        <taxon>Streptococcaceae</taxon>
        <taxon>Streptococcus</taxon>
    </lineage>
</organism>
<sequence length="242" mass="27099">MIEYKNVALRYTEKDVLRDVNLQIEDGEFMVLVGPSGSGKTTMLKMINRLLEPTDGNIYMDGKRIKDYDERELRLSTGYVLQAIALFPNLTVEENIALIPEMKGWTKEEIAQKTEELLAKVGLPVAEYGHRLPSELSGGEQQRVGIVRAMIGQPKILLMDEPFSALDAISRKQLQVLTKELHKEFGMTTIFVTHDTDEALKLADRIAVLQDGEIRQVSNPETILKAPATDFVADLFGGSIHD</sequence>
<proteinExistence type="inferred from homology"/>
<keyword id="KW-0067">ATP-binding</keyword>
<keyword id="KW-0997">Cell inner membrane</keyword>
<keyword id="KW-1003">Cell membrane</keyword>
<keyword id="KW-0472">Membrane</keyword>
<keyword id="KW-0547">Nucleotide-binding</keyword>
<keyword id="KW-1185">Reference proteome</keyword>
<keyword id="KW-1278">Translocase</keyword>
<keyword id="KW-0813">Transport</keyword>